<gene>
    <name evidence="1" type="primary">pnp</name>
    <name type="ordered locus">Plav_3632</name>
</gene>
<proteinExistence type="inferred from homology"/>
<protein>
    <recommendedName>
        <fullName evidence="1">Polyribonucleotide nucleotidyltransferase</fullName>
        <ecNumber evidence="1">2.7.7.8</ecNumber>
    </recommendedName>
    <alternativeName>
        <fullName evidence="1">Polynucleotide phosphorylase</fullName>
        <shortName evidence="1">PNPase</shortName>
    </alternativeName>
</protein>
<reference key="1">
    <citation type="journal article" date="2011" name="Stand. Genomic Sci.">
        <title>Complete genome sequence of Parvibaculum lavamentivorans type strain (DS-1(T)).</title>
        <authorList>
            <person name="Schleheck D."/>
            <person name="Weiss M."/>
            <person name="Pitluck S."/>
            <person name="Bruce D."/>
            <person name="Land M.L."/>
            <person name="Han S."/>
            <person name="Saunders E."/>
            <person name="Tapia R."/>
            <person name="Detter C."/>
            <person name="Brettin T."/>
            <person name="Han J."/>
            <person name="Woyke T."/>
            <person name="Goodwin L."/>
            <person name="Pennacchio L."/>
            <person name="Nolan M."/>
            <person name="Cook A.M."/>
            <person name="Kjelleberg S."/>
            <person name="Thomas T."/>
        </authorList>
    </citation>
    <scope>NUCLEOTIDE SEQUENCE [LARGE SCALE GENOMIC DNA]</scope>
    <source>
        <strain>DS-1 / DSM 13023 / NCIMB 13966</strain>
    </source>
</reference>
<feature type="chain" id="PRO_0000329749" description="Polyribonucleotide nucleotidyltransferase">
    <location>
        <begin position="1"/>
        <end position="728"/>
    </location>
</feature>
<feature type="domain" description="KH" evidence="1">
    <location>
        <begin position="554"/>
        <end position="613"/>
    </location>
</feature>
<feature type="domain" description="S1 motif" evidence="1">
    <location>
        <begin position="623"/>
        <end position="691"/>
    </location>
</feature>
<feature type="region of interest" description="Disordered" evidence="2">
    <location>
        <begin position="697"/>
        <end position="728"/>
    </location>
</feature>
<feature type="compositionally biased region" description="Acidic residues" evidence="2">
    <location>
        <begin position="697"/>
        <end position="707"/>
    </location>
</feature>
<feature type="compositionally biased region" description="Basic and acidic residues" evidence="2">
    <location>
        <begin position="709"/>
        <end position="718"/>
    </location>
</feature>
<feature type="binding site" evidence="1">
    <location>
        <position position="487"/>
    </location>
    <ligand>
        <name>Mg(2+)</name>
        <dbReference type="ChEBI" id="CHEBI:18420"/>
    </ligand>
</feature>
<feature type="binding site" evidence="1">
    <location>
        <position position="493"/>
    </location>
    <ligand>
        <name>Mg(2+)</name>
        <dbReference type="ChEBI" id="CHEBI:18420"/>
    </ligand>
</feature>
<accession>A7HZ97</accession>
<name>PNP_PARL1</name>
<comment type="function">
    <text evidence="1">Involved in mRNA degradation. Catalyzes the phosphorolysis of single-stranded polyribonucleotides processively in the 3'- to 5'-direction.</text>
</comment>
<comment type="catalytic activity">
    <reaction evidence="1">
        <text>RNA(n+1) + phosphate = RNA(n) + a ribonucleoside 5'-diphosphate</text>
        <dbReference type="Rhea" id="RHEA:22096"/>
        <dbReference type="Rhea" id="RHEA-COMP:14527"/>
        <dbReference type="Rhea" id="RHEA-COMP:17342"/>
        <dbReference type="ChEBI" id="CHEBI:43474"/>
        <dbReference type="ChEBI" id="CHEBI:57930"/>
        <dbReference type="ChEBI" id="CHEBI:140395"/>
        <dbReference type="EC" id="2.7.7.8"/>
    </reaction>
</comment>
<comment type="cofactor">
    <cofactor evidence="1">
        <name>Mg(2+)</name>
        <dbReference type="ChEBI" id="CHEBI:18420"/>
    </cofactor>
</comment>
<comment type="subcellular location">
    <subcellularLocation>
        <location evidence="1">Cytoplasm</location>
    </subcellularLocation>
</comment>
<comment type="similarity">
    <text evidence="1">Belongs to the polyribonucleotide nucleotidyltransferase family.</text>
</comment>
<sequence>MFKITREEIEWGGRTLVLETGKIARQADGAVLATYGDTTVLATVVGERKPKPGLDFFPLTVNYQEKTYAAGKIPGGFFKREGRPSEKETLVSRLIDRPIRPLFIKGFKNETQVIATVVSHDMENDPDIVAMIAVSAALTISGLPFLGPIGAARVGYIGGEYKLNPMIDEMPESALDLVVAGTADAVMMVESEAKELSEDIMLGAVMFGHKEFQPVIDMIIRMAEKCAKEPRAIDVKDNSELVAKVRELAESDVRAAYGLKDKGQRHEALAAAKDKVKSALCNPEDPNAVSETDVGGVFKSIESDVVRNSILDTKSRIDGRDLETVRPIVSEVGVLPRTHGSALFTRGETQALVVATLGTGDDEQFIDALEGTYKENFLLHYNFPPFSVGETGRVGFTGRREVGHGKLAWRALRAVLPPKTEFPYTLRLVSEITESNGSSSMATVCGSSLAMMDAGVPLKRAVAGIAMGLILEGERFAVLSDILGDEDHLGDMDFKVAGTQEGVTSLQMDIKITGINERIMKQALAQAKGGRLHILGEMAKALDTARPEMGEYAPRIEVITVPTDKIREVIGTGGKVIREIVEKTGAKVDISDDGTIKVASSDGESIRKAIAWIQGIVAEPEVGKIYEGTVVKAVDFGAFVNFFGPRDGLVHISQMAPTRVEQVSDVVKEGDKVKVKLLGFDDRGKVRLSMKHVNQETGEEIVYENEPAEQPREKREGGGGRGRRRERD</sequence>
<organism>
    <name type="scientific">Parvibaculum lavamentivorans (strain DS-1 / DSM 13023 / NCIMB 13966)</name>
    <dbReference type="NCBI Taxonomy" id="402881"/>
    <lineage>
        <taxon>Bacteria</taxon>
        <taxon>Pseudomonadati</taxon>
        <taxon>Pseudomonadota</taxon>
        <taxon>Alphaproteobacteria</taxon>
        <taxon>Hyphomicrobiales</taxon>
        <taxon>Parvibaculaceae</taxon>
        <taxon>Parvibaculum</taxon>
    </lineage>
</organism>
<evidence type="ECO:0000255" key="1">
    <source>
        <dbReference type="HAMAP-Rule" id="MF_01595"/>
    </source>
</evidence>
<evidence type="ECO:0000256" key="2">
    <source>
        <dbReference type="SAM" id="MobiDB-lite"/>
    </source>
</evidence>
<dbReference type="EC" id="2.7.7.8" evidence="1"/>
<dbReference type="EMBL" id="CP000774">
    <property type="protein sequence ID" value="ABS65230.1"/>
    <property type="molecule type" value="Genomic_DNA"/>
</dbReference>
<dbReference type="RefSeq" id="WP_012112491.1">
    <property type="nucleotide sequence ID" value="NC_009719.1"/>
</dbReference>
<dbReference type="SMR" id="A7HZ97"/>
<dbReference type="STRING" id="402881.Plav_3632"/>
<dbReference type="KEGG" id="pla:Plav_3632"/>
<dbReference type="eggNOG" id="COG1185">
    <property type="taxonomic scope" value="Bacteria"/>
</dbReference>
<dbReference type="HOGENOM" id="CLU_004217_2_2_5"/>
<dbReference type="OrthoDB" id="9804305at2"/>
<dbReference type="Proteomes" id="UP000006377">
    <property type="component" value="Chromosome"/>
</dbReference>
<dbReference type="GO" id="GO:0005829">
    <property type="term" value="C:cytosol"/>
    <property type="evidence" value="ECO:0007669"/>
    <property type="project" value="TreeGrafter"/>
</dbReference>
<dbReference type="GO" id="GO:0000175">
    <property type="term" value="F:3'-5'-RNA exonuclease activity"/>
    <property type="evidence" value="ECO:0007669"/>
    <property type="project" value="TreeGrafter"/>
</dbReference>
<dbReference type="GO" id="GO:0000287">
    <property type="term" value="F:magnesium ion binding"/>
    <property type="evidence" value="ECO:0007669"/>
    <property type="project" value="UniProtKB-UniRule"/>
</dbReference>
<dbReference type="GO" id="GO:0004654">
    <property type="term" value="F:polyribonucleotide nucleotidyltransferase activity"/>
    <property type="evidence" value="ECO:0007669"/>
    <property type="project" value="UniProtKB-UniRule"/>
</dbReference>
<dbReference type="GO" id="GO:0003723">
    <property type="term" value="F:RNA binding"/>
    <property type="evidence" value="ECO:0007669"/>
    <property type="project" value="UniProtKB-UniRule"/>
</dbReference>
<dbReference type="GO" id="GO:0006402">
    <property type="term" value="P:mRNA catabolic process"/>
    <property type="evidence" value="ECO:0007669"/>
    <property type="project" value="UniProtKB-UniRule"/>
</dbReference>
<dbReference type="GO" id="GO:0006396">
    <property type="term" value="P:RNA processing"/>
    <property type="evidence" value="ECO:0007669"/>
    <property type="project" value="InterPro"/>
</dbReference>
<dbReference type="CDD" id="cd02393">
    <property type="entry name" value="KH-I_PNPase"/>
    <property type="match status" value="1"/>
</dbReference>
<dbReference type="CDD" id="cd11363">
    <property type="entry name" value="RNase_PH_PNPase_1"/>
    <property type="match status" value="1"/>
</dbReference>
<dbReference type="CDD" id="cd11364">
    <property type="entry name" value="RNase_PH_PNPase_2"/>
    <property type="match status" value="1"/>
</dbReference>
<dbReference type="CDD" id="cd04472">
    <property type="entry name" value="S1_PNPase"/>
    <property type="match status" value="1"/>
</dbReference>
<dbReference type="FunFam" id="2.40.50.140:FF:000107">
    <property type="entry name" value="Polyribonucleotide nucleotidyltransferase"/>
    <property type="match status" value="1"/>
</dbReference>
<dbReference type="FunFam" id="3.30.1370.10:FF:000001">
    <property type="entry name" value="Polyribonucleotide nucleotidyltransferase"/>
    <property type="match status" value="1"/>
</dbReference>
<dbReference type="FunFam" id="3.30.230.70:FF:000001">
    <property type="entry name" value="Polyribonucleotide nucleotidyltransferase"/>
    <property type="match status" value="1"/>
</dbReference>
<dbReference type="FunFam" id="3.30.230.70:FF:000002">
    <property type="entry name" value="Polyribonucleotide nucleotidyltransferase"/>
    <property type="match status" value="1"/>
</dbReference>
<dbReference type="Gene3D" id="3.30.230.70">
    <property type="entry name" value="GHMP Kinase, N-terminal domain"/>
    <property type="match status" value="2"/>
</dbReference>
<dbReference type="Gene3D" id="3.30.1370.10">
    <property type="entry name" value="K Homology domain, type 1"/>
    <property type="match status" value="1"/>
</dbReference>
<dbReference type="Gene3D" id="2.40.50.140">
    <property type="entry name" value="Nucleic acid-binding proteins"/>
    <property type="match status" value="1"/>
</dbReference>
<dbReference type="HAMAP" id="MF_01595">
    <property type="entry name" value="PNPase"/>
    <property type="match status" value="1"/>
</dbReference>
<dbReference type="InterPro" id="IPR001247">
    <property type="entry name" value="ExoRNase_PH_dom1"/>
</dbReference>
<dbReference type="InterPro" id="IPR015847">
    <property type="entry name" value="ExoRNase_PH_dom2"/>
</dbReference>
<dbReference type="InterPro" id="IPR036345">
    <property type="entry name" value="ExoRNase_PH_dom2_sf"/>
</dbReference>
<dbReference type="InterPro" id="IPR004087">
    <property type="entry name" value="KH_dom"/>
</dbReference>
<dbReference type="InterPro" id="IPR004088">
    <property type="entry name" value="KH_dom_type_1"/>
</dbReference>
<dbReference type="InterPro" id="IPR036612">
    <property type="entry name" value="KH_dom_type_1_sf"/>
</dbReference>
<dbReference type="InterPro" id="IPR012340">
    <property type="entry name" value="NA-bd_OB-fold"/>
</dbReference>
<dbReference type="InterPro" id="IPR012162">
    <property type="entry name" value="PNPase"/>
</dbReference>
<dbReference type="InterPro" id="IPR027408">
    <property type="entry name" value="PNPase/RNase_PH_dom_sf"/>
</dbReference>
<dbReference type="InterPro" id="IPR015848">
    <property type="entry name" value="PNPase_PH_RNA-bd_bac/org-type"/>
</dbReference>
<dbReference type="InterPro" id="IPR036456">
    <property type="entry name" value="PNPase_PH_RNA-bd_sf"/>
</dbReference>
<dbReference type="InterPro" id="IPR020568">
    <property type="entry name" value="Ribosomal_Su5_D2-typ_SF"/>
</dbReference>
<dbReference type="InterPro" id="IPR003029">
    <property type="entry name" value="S1_domain"/>
</dbReference>
<dbReference type="NCBIfam" id="TIGR03591">
    <property type="entry name" value="polynuc_phos"/>
    <property type="match status" value="1"/>
</dbReference>
<dbReference type="NCBIfam" id="NF008805">
    <property type="entry name" value="PRK11824.1"/>
    <property type="match status" value="1"/>
</dbReference>
<dbReference type="PANTHER" id="PTHR11252">
    <property type="entry name" value="POLYRIBONUCLEOTIDE NUCLEOTIDYLTRANSFERASE"/>
    <property type="match status" value="1"/>
</dbReference>
<dbReference type="PANTHER" id="PTHR11252:SF0">
    <property type="entry name" value="POLYRIBONUCLEOTIDE NUCLEOTIDYLTRANSFERASE 1, MITOCHONDRIAL"/>
    <property type="match status" value="1"/>
</dbReference>
<dbReference type="Pfam" id="PF00013">
    <property type="entry name" value="KH_1"/>
    <property type="match status" value="1"/>
</dbReference>
<dbReference type="Pfam" id="PF03726">
    <property type="entry name" value="PNPase"/>
    <property type="match status" value="1"/>
</dbReference>
<dbReference type="Pfam" id="PF01138">
    <property type="entry name" value="RNase_PH"/>
    <property type="match status" value="2"/>
</dbReference>
<dbReference type="Pfam" id="PF03725">
    <property type="entry name" value="RNase_PH_C"/>
    <property type="match status" value="2"/>
</dbReference>
<dbReference type="Pfam" id="PF00575">
    <property type="entry name" value="S1"/>
    <property type="match status" value="1"/>
</dbReference>
<dbReference type="PIRSF" id="PIRSF005499">
    <property type="entry name" value="PNPase"/>
    <property type="match status" value="1"/>
</dbReference>
<dbReference type="SMART" id="SM00322">
    <property type="entry name" value="KH"/>
    <property type="match status" value="1"/>
</dbReference>
<dbReference type="SMART" id="SM00316">
    <property type="entry name" value="S1"/>
    <property type="match status" value="1"/>
</dbReference>
<dbReference type="SUPFAM" id="SSF54791">
    <property type="entry name" value="Eukaryotic type KH-domain (KH-domain type I)"/>
    <property type="match status" value="1"/>
</dbReference>
<dbReference type="SUPFAM" id="SSF50249">
    <property type="entry name" value="Nucleic acid-binding proteins"/>
    <property type="match status" value="1"/>
</dbReference>
<dbReference type="SUPFAM" id="SSF46915">
    <property type="entry name" value="Polynucleotide phosphorylase/guanosine pentaphosphate synthase (PNPase/GPSI), domain 3"/>
    <property type="match status" value="1"/>
</dbReference>
<dbReference type="SUPFAM" id="SSF55666">
    <property type="entry name" value="Ribonuclease PH domain 2-like"/>
    <property type="match status" value="2"/>
</dbReference>
<dbReference type="SUPFAM" id="SSF54211">
    <property type="entry name" value="Ribosomal protein S5 domain 2-like"/>
    <property type="match status" value="2"/>
</dbReference>
<dbReference type="PROSITE" id="PS50084">
    <property type="entry name" value="KH_TYPE_1"/>
    <property type="match status" value="1"/>
</dbReference>
<dbReference type="PROSITE" id="PS50126">
    <property type="entry name" value="S1"/>
    <property type="match status" value="1"/>
</dbReference>
<keyword id="KW-0963">Cytoplasm</keyword>
<keyword id="KW-0460">Magnesium</keyword>
<keyword id="KW-0479">Metal-binding</keyword>
<keyword id="KW-0548">Nucleotidyltransferase</keyword>
<keyword id="KW-1185">Reference proteome</keyword>
<keyword id="KW-0694">RNA-binding</keyword>
<keyword id="KW-0808">Transferase</keyword>